<organism>
    <name type="scientific">Mycobacterium tuberculosis (strain CDC 1551 / Oshkosh)</name>
    <dbReference type="NCBI Taxonomy" id="83331"/>
    <lineage>
        <taxon>Bacteria</taxon>
        <taxon>Bacillati</taxon>
        <taxon>Actinomycetota</taxon>
        <taxon>Actinomycetes</taxon>
        <taxon>Mycobacteriales</taxon>
        <taxon>Mycobacteriaceae</taxon>
        <taxon>Mycobacterium</taxon>
        <taxon>Mycobacterium tuberculosis complex</taxon>
    </lineage>
</organism>
<gene>
    <name type="primary">cut3</name>
    <name type="ordered locus">MT3557</name>
</gene>
<keyword id="KW-1015">Disulfide bond</keyword>
<keyword id="KW-0378">Hydrolase</keyword>
<keyword id="KW-1185">Reference proteome</keyword>
<keyword id="KW-0964">Secreted</keyword>
<keyword id="KW-0719">Serine esterase</keyword>
<keyword id="KW-0732">Signal</keyword>
<proteinExistence type="inferred from homology"/>
<sequence length="262" mass="26578">MNNRPIRLLTSGRAGLGAGALITAVVLLIALGAVWTLVAFADGCPDAEVTFARGTGEPPGIGRVGQAFVDSLRQQTGMEIGVYPVNYAASRLQLHGGDGANDAISHIKSMASSCPNTKLVLGGYSQGATVIDIVAGVPLGSISFGSPLPAAYADNVAAVAVFGNPSNRAGGSLSSLSPLFGSKAIDLCNPTDPICHVGPGNEFSGHIDDYIPTYTTQAASFVVQRLRAGSVPHLPGSVPQLPGSVLQMPGTAAPAPESLHGR</sequence>
<dbReference type="EC" id="3.1.1.-" evidence="4"/>
<dbReference type="EMBL" id="AE000516">
    <property type="protein sequence ID" value="AAK47897.1"/>
    <property type="status" value="ALT_INIT"/>
    <property type="molecule type" value="Genomic_DNA"/>
</dbReference>
<dbReference type="PIR" id="H70564">
    <property type="entry name" value="H70564"/>
</dbReference>
<dbReference type="RefSeq" id="WP_015628936.1">
    <property type="nucleotide sequence ID" value="NZ_KK341227.1"/>
</dbReference>
<dbReference type="SMR" id="P9WP38"/>
<dbReference type="ESTHER" id="myctu-cut3">
    <property type="family name" value="Cutinase"/>
</dbReference>
<dbReference type="KEGG" id="mtc:MT3557"/>
<dbReference type="PATRIC" id="fig|83331.31.peg.3816"/>
<dbReference type="HOGENOM" id="CLU_040058_3_1_11"/>
<dbReference type="Proteomes" id="UP000001020">
    <property type="component" value="Chromosome"/>
</dbReference>
<dbReference type="GO" id="GO:0005576">
    <property type="term" value="C:extracellular region"/>
    <property type="evidence" value="ECO:0007669"/>
    <property type="project" value="UniProtKB-SubCell"/>
</dbReference>
<dbReference type="GO" id="GO:0052689">
    <property type="term" value="F:carboxylic ester hydrolase activity"/>
    <property type="evidence" value="ECO:0007669"/>
    <property type="project" value="UniProtKB-KW"/>
</dbReference>
<dbReference type="Gene3D" id="3.40.50.1820">
    <property type="entry name" value="alpha/beta hydrolase"/>
    <property type="match status" value="1"/>
</dbReference>
<dbReference type="InterPro" id="IPR029058">
    <property type="entry name" value="AB_hydrolase_fold"/>
</dbReference>
<dbReference type="InterPro" id="IPR000675">
    <property type="entry name" value="Cutinase/axe"/>
</dbReference>
<dbReference type="InterPro" id="IPR043580">
    <property type="entry name" value="CUTINASE_1"/>
</dbReference>
<dbReference type="PANTHER" id="PTHR33630:SF9">
    <property type="entry name" value="CUTINASE 4"/>
    <property type="match status" value="1"/>
</dbReference>
<dbReference type="PANTHER" id="PTHR33630">
    <property type="entry name" value="CUTINASE RV1984C-RELATED-RELATED"/>
    <property type="match status" value="1"/>
</dbReference>
<dbReference type="Pfam" id="PF01083">
    <property type="entry name" value="Cutinase"/>
    <property type="match status" value="1"/>
</dbReference>
<dbReference type="SMART" id="SM01110">
    <property type="entry name" value="Cutinase"/>
    <property type="match status" value="1"/>
</dbReference>
<dbReference type="SUPFAM" id="SSF53474">
    <property type="entry name" value="alpha/beta-Hydrolases"/>
    <property type="match status" value="1"/>
</dbReference>
<dbReference type="PROSITE" id="PS00155">
    <property type="entry name" value="CUTINASE_1"/>
    <property type="match status" value="1"/>
</dbReference>
<feature type="signal peptide" evidence="5">
    <location>
        <begin position="1"/>
        <end position="41"/>
    </location>
</feature>
<feature type="chain" id="PRO_0000427019" description="Probable carboxylesterase Culp3">
    <location>
        <begin position="42"/>
        <end position="262"/>
    </location>
</feature>
<feature type="region of interest" description="Disordered" evidence="6">
    <location>
        <begin position="241"/>
        <end position="262"/>
    </location>
</feature>
<feature type="active site" description="Nucleophile" evidence="1">
    <location>
        <position position="125"/>
    </location>
</feature>
<feature type="active site" evidence="1">
    <location>
        <position position="192"/>
    </location>
</feature>
<feature type="active site" description="Proton donor/acceptor" evidence="1">
    <location>
        <position position="206"/>
    </location>
</feature>
<feature type="site" description="Transition state stabilizer" evidence="2">
    <location>
        <position position="126"/>
    </location>
</feature>
<feature type="disulfide bond" evidence="1">
    <location>
        <begin position="44"/>
        <end position="114"/>
    </location>
</feature>
<feature type="disulfide bond" evidence="1">
    <location>
        <begin position="188"/>
        <end position="195"/>
    </location>
</feature>
<protein>
    <recommendedName>
        <fullName evidence="3">Probable carboxylesterase Culp3</fullName>
        <ecNumber evidence="4">3.1.1.-</ecNumber>
    </recommendedName>
    <alternativeName>
        <fullName evidence="3">Cutinase-like protein 3</fullName>
        <shortName evidence="3">Culp3</shortName>
    </alternativeName>
</protein>
<accession>P9WP38</accession>
<accession>L0TCK2</accession>
<accession>O06318</accession>
<accession>P0A536</accession>
<evidence type="ECO:0000250" key="1">
    <source>
        <dbReference type="UniProtKB" id="O53581"/>
    </source>
</evidence>
<evidence type="ECO:0000250" key="2">
    <source>
        <dbReference type="UniProtKB" id="P00590"/>
    </source>
</evidence>
<evidence type="ECO:0000250" key="3">
    <source>
        <dbReference type="UniProtKB" id="P9WP39"/>
    </source>
</evidence>
<evidence type="ECO:0000250" key="4">
    <source>
        <dbReference type="UniProtKB" id="P9WP43"/>
    </source>
</evidence>
<evidence type="ECO:0000255" key="5"/>
<evidence type="ECO:0000256" key="6">
    <source>
        <dbReference type="SAM" id="MobiDB-lite"/>
    </source>
</evidence>
<evidence type="ECO:0000305" key="7"/>
<comment type="subcellular location">
    <subcellularLocation>
        <location evidence="7">Secreted</location>
    </subcellularLocation>
</comment>
<comment type="similarity">
    <text evidence="7">Belongs to the cutinase family.</text>
</comment>
<comment type="sequence caution" evidence="7">
    <conflict type="erroneous initiation">
        <sequence resource="EMBL-CDS" id="AAK47897"/>
    </conflict>
</comment>
<reference key="1">
    <citation type="journal article" date="2002" name="J. Bacteriol.">
        <title>Whole-genome comparison of Mycobacterium tuberculosis clinical and laboratory strains.</title>
        <authorList>
            <person name="Fleischmann R.D."/>
            <person name="Alland D."/>
            <person name="Eisen J.A."/>
            <person name="Carpenter L."/>
            <person name="White O."/>
            <person name="Peterson J.D."/>
            <person name="DeBoy R.T."/>
            <person name="Dodson R.J."/>
            <person name="Gwinn M.L."/>
            <person name="Haft D.H."/>
            <person name="Hickey E.K."/>
            <person name="Kolonay J.F."/>
            <person name="Nelson W.C."/>
            <person name="Umayam L.A."/>
            <person name="Ermolaeva M.D."/>
            <person name="Salzberg S.L."/>
            <person name="Delcher A."/>
            <person name="Utterback T.R."/>
            <person name="Weidman J.F."/>
            <person name="Khouri H.M."/>
            <person name="Gill J."/>
            <person name="Mikula A."/>
            <person name="Bishai W."/>
            <person name="Jacobs W.R. Jr."/>
            <person name="Venter J.C."/>
            <person name="Fraser C.M."/>
        </authorList>
    </citation>
    <scope>NUCLEOTIDE SEQUENCE [LARGE SCALE GENOMIC DNA]</scope>
    <source>
        <strain>CDC 1551 / Oshkosh</strain>
    </source>
</reference>
<name>CULP3_MYCTO</name>